<evidence type="ECO:0000255" key="1">
    <source>
        <dbReference type="HAMAP-Rule" id="MF_00116"/>
    </source>
</evidence>
<feature type="chain" id="PRO_1000015502" description="Deoxyuridine 5'-triphosphate nucleotidohydrolase">
    <location>
        <begin position="1"/>
        <end position="149"/>
    </location>
</feature>
<feature type="binding site" evidence="1">
    <location>
        <begin position="68"/>
        <end position="70"/>
    </location>
    <ligand>
        <name>substrate</name>
    </ligand>
</feature>
<feature type="binding site" evidence="1">
    <location>
        <position position="81"/>
    </location>
    <ligand>
        <name>substrate</name>
    </ligand>
</feature>
<feature type="binding site" evidence="1">
    <location>
        <begin position="85"/>
        <end position="87"/>
    </location>
    <ligand>
        <name>substrate</name>
    </ligand>
</feature>
<feature type="binding site" evidence="1">
    <location>
        <position position="95"/>
    </location>
    <ligand>
        <name>substrate</name>
    </ligand>
</feature>
<gene>
    <name evidence="1" type="primary">dut</name>
    <name type="ordered locus">Rfer_2646</name>
</gene>
<keyword id="KW-0378">Hydrolase</keyword>
<keyword id="KW-0460">Magnesium</keyword>
<keyword id="KW-0479">Metal-binding</keyword>
<keyword id="KW-0546">Nucleotide metabolism</keyword>
<keyword id="KW-1185">Reference proteome</keyword>
<proteinExistence type="inferred from homology"/>
<accession>Q21V41</accession>
<comment type="function">
    <text evidence="1">This enzyme is involved in nucleotide metabolism: it produces dUMP, the immediate precursor of thymidine nucleotides and it decreases the intracellular concentration of dUTP so that uracil cannot be incorporated into DNA.</text>
</comment>
<comment type="catalytic activity">
    <reaction evidence="1">
        <text>dUTP + H2O = dUMP + diphosphate + H(+)</text>
        <dbReference type="Rhea" id="RHEA:10248"/>
        <dbReference type="ChEBI" id="CHEBI:15377"/>
        <dbReference type="ChEBI" id="CHEBI:15378"/>
        <dbReference type="ChEBI" id="CHEBI:33019"/>
        <dbReference type="ChEBI" id="CHEBI:61555"/>
        <dbReference type="ChEBI" id="CHEBI:246422"/>
        <dbReference type="EC" id="3.6.1.23"/>
    </reaction>
</comment>
<comment type="cofactor">
    <cofactor evidence="1">
        <name>Mg(2+)</name>
        <dbReference type="ChEBI" id="CHEBI:18420"/>
    </cofactor>
</comment>
<comment type="pathway">
    <text evidence="1">Pyrimidine metabolism; dUMP biosynthesis; dUMP from dCTP (dUTP route): step 2/2.</text>
</comment>
<comment type="similarity">
    <text evidence="1">Belongs to the dUTPase family.</text>
</comment>
<reference key="1">
    <citation type="submission" date="2006-02" db="EMBL/GenBank/DDBJ databases">
        <title>Complete sequence of chromosome of Rhodoferax ferrireducens DSM 15236.</title>
        <authorList>
            <person name="Copeland A."/>
            <person name="Lucas S."/>
            <person name="Lapidus A."/>
            <person name="Barry K."/>
            <person name="Detter J.C."/>
            <person name="Glavina del Rio T."/>
            <person name="Hammon N."/>
            <person name="Israni S."/>
            <person name="Pitluck S."/>
            <person name="Brettin T."/>
            <person name="Bruce D."/>
            <person name="Han C."/>
            <person name="Tapia R."/>
            <person name="Gilna P."/>
            <person name="Kiss H."/>
            <person name="Schmutz J."/>
            <person name="Larimer F."/>
            <person name="Land M."/>
            <person name="Kyrpides N."/>
            <person name="Ivanova N."/>
            <person name="Richardson P."/>
        </authorList>
    </citation>
    <scope>NUCLEOTIDE SEQUENCE [LARGE SCALE GENOMIC DNA]</scope>
    <source>
        <strain>ATCC BAA-621 / DSM 15236 / T118</strain>
    </source>
</reference>
<name>DUT_ALBFT</name>
<protein>
    <recommendedName>
        <fullName evidence="1">Deoxyuridine 5'-triphosphate nucleotidohydrolase</fullName>
        <shortName evidence="1">dUTPase</shortName>
        <ecNumber evidence="1">3.6.1.23</ecNumber>
    </recommendedName>
    <alternativeName>
        <fullName evidence="1">dUTP pyrophosphatase</fullName>
    </alternativeName>
</protein>
<sequence length="149" mass="15913">MIKIDVKIIDPRMADQLPAYATPGSAGLDLRACLDAPLTLLPNAWQLVPTGIAIYLKDPKFAAMILPRSGLGHKHGIVLGNLVGLIDSDYQGQLMVSAWNRSDVAFTIEPMERIAQLVIVPVLQAQFNVVSEFPASARGEGGYGSTGKG</sequence>
<dbReference type="EC" id="3.6.1.23" evidence="1"/>
<dbReference type="EMBL" id="CP000267">
    <property type="protein sequence ID" value="ABD70362.1"/>
    <property type="molecule type" value="Genomic_DNA"/>
</dbReference>
<dbReference type="SMR" id="Q21V41"/>
<dbReference type="STRING" id="338969.Rfer_2646"/>
<dbReference type="KEGG" id="rfr:Rfer_2646"/>
<dbReference type="eggNOG" id="COG0756">
    <property type="taxonomic scope" value="Bacteria"/>
</dbReference>
<dbReference type="HOGENOM" id="CLU_068508_1_1_4"/>
<dbReference type="UniPathway" id="UPA00610">
    <property type="reaction ID" value="UER00666"/>
</dbReference>
<dbReference type="Proteomes" id="UP000008332">
    <property type="component" value="Chromosome"/>
</dbReference>
<dbReference type="GO" id="GO:0004170">
    <property type="term" value="F:dUTP diphosphatase activity"/>
    <property type="evidence" value="ECO:0007669"/>
    <property type="project" value="UniProtKB-UniRule"/>
</dbReference>
<dbReference type="GO" id="GO:0000287">
    <property type="term" value="F:magnesium ion binding"/>
    <property type="evidence" value="ECO:0007669"/>
    <property type="project" value="UniProtKB-UniRule"/>
</dbReference>
<dbReference type="GO" id="GO:0006226">
    <property type="term" value="P:dUMP biosynthetic process"/>
    <property type="evidence" value="ECO:0007669"/>
    <property type="project" value="UniProtKB-UniRule"/>
</dbReference>
<dbReference type="GO" id="GO:0046081">
    <property type="term" value="P:dUTP catabolic process"/>
    <property type="evidence" value="ECO:0007669"/>
    <property type="project" value="InterPro"/>
</dbReference>
<dbReference type="CDD" id="cd07557">
    <property type="entry name" value="trimeric_dUTPase"/>
    <property type="match status" value="1"/>
</dbReference>
<dbReference type="FunFam" id="2.70.40.10:FF:000002">
    <property type="entry name" value="dUTP diphosphatase"/>
    <property type="match status" value="1"/>
</dbReference>
<dbReference type="Gene3D" id="2.70.40.10">
    <property type="match status" value="1"/>
</dbReference>
<dbReference type="HAMAP" id="MF_00116">
    <property type="entry name" value="dUTPase_bact"/>
    <property type="match status" value="1"/>
</dbReference>
<dbReference type="InterPro" id="IPR008181">
    <property type="entry name" value="dUTPase"/>
</dbReference>
<dbReference type="InterPro" id="IPR029054">
    <property type="entry name" value="dUTPase-like"/>
</dbReference>
<dbReference type="InterPro" id="IPR036157">
    <property type="entry name" value="dUTPase-like_sf"/>
</dbReference>
<dbReference type="InterPro" id="IPR033704">
    <property type="entry name" value="dUTPase_trimeric"/>
</dbReference>
<dbReference type="NCBIfam" id="TIGR00576">
    <property type="entry name" value="dut"/>
    <property type="match status" value="1"/>
</dbReference>
<dbReference type="NCBIfam" id="NF001862">
    <property type="entry name" value="PRK00601.1"/>
    <property type="match status" value="1"/>
</dbReference>
<dbReference type="PANTHER" id="PTHR11241">
    <property type="entry name" value="DEOXYURIDINE 5'-TRIPHOSPHATE NUCLEOTIDOHYDROLASE"/>
    <property type="match status" value="1"/>
</dbReference>
<dbReference type="PANTHER" id="PTHR11241:SF0">
    <property type="entry name" value="DEOXYURIDINE 5'-TRIPHOSPHATE NUCLEOTIDOHYDROLASE"/>
    <property type="match status" value="1"/>
</dbReference>
<dbReference type="Pfam" id="PF00692">
    <property type="entry name" value="dUTPase"/>
    <property type="match status" value="1"/>
</dbReference>
<dbReference type="SUPFAM" id="SSF51283">
    <property type="entry name" value="dUTPase-like"/>
    <property type="match status" value="1"/>
</dbReference>
<organism>
    <name type="scientific">Albidiferax ferrireducens (strain ATCC BAA-621 / DSM 15236 / T118)</name>
    <name type="common">Rhodoferax ferrireducens</name>
    <dbReference type="NCBI Taxonomy" id="338969"/>
    <lineage>
        <taxon>Bacteria</taxon>
        <taxon>Pseudomonadati</taxon>
        <taxon>Pseudomonadota</taxon>
        <taxon>Betaproteobacteria</taxon>
        <taxon>Burkholderiales</taxon>
        <taxon>Comamonadaceae</taxon>
        <taxon>Rhodoferax</taxon>
    </lineage>
</organism>